<keyword id="KW-0927">Auxin signaling pathway</keyword>
<keyword id="KW-1003">Cell membrane</keyword>
<keyword id="KW-0217">Developmental protein</keyword>
<keyword id="KW-0341">Growth regulation</keyword>
<keyword id="KW-0472">Membrane</keyword>
<keyword id="KW-1185">Reference proteome</keyword>
<protein>
    <recommendedName>
        <fullName evidence="4">Auxin-responsive protein SAUR62</fullName>
    </recommendedName>
    <alternativeName>
        <fullName evidence="3">Protein SMALL AUXIN UP RNA 62</fullName>
    </alternativeName>
</protein>
<sequence length="141" mass="16142">MMINAKKLMKLAKKWQQRAALKRKRISFQRSSITTSSQTAVEKGCFVVYTADKIRFSFPLSYLSNTIVQELLKISEEEFGLPTEGPITLPFDSAFLEYLINLIQRRMDEDTEKALLLSISSARSSFQPQQHCSATQQLLVF</sequence>
<gene>
    <name evidence="3" type="primary">SAUR62</name>
    <name evidence="5" type="ordered locus">At1g29430</name>
    <name evidence="6" type="ORF">F15D2.2</name>
</gene>
<name>SAU62_ARATH</name>
<organism evidence="7">
    <name type="scientific">Arabidopsis thaliana</name>
    <name type="common">Mouse-ear cress</name>
    <dbReference type="NCBI Taxonomy" id="3702"/>
    <lineage>
        <taxon>Eukaryota</taxon>
        <taxon>Viridiplantae</taxon>
        <taxon>Streptophyta</taxon>
        <taxon>Embryophyta</taxon>
        <taxon>Tracheophyta</taxon>
        <taxon>Spermatophyta</taxon>
        <taxon>Magnoliopsida</taxon>
        <taxon>eudicotyledons</taxon>
        <taxon>Gunneridae</taxon>
        <taxon>Pentapetalae</taxon>
        <taxon>rosids</taxon>
        <taxon>malvids</taxon>
        <taxon>Brassicales</taxon>
        <taxon>Brassicaceae</taxon>
        <taxon>Camelineae</taxon>
        <taxon>Arabidopsis</taxon>
    </lineage>
</organism>
<proteinExistence type="evidence at transcript level"/>
<feature type="chain" id="PRO_0000433074" description="Auxin-responsive protein SAUR62">
    <location>
        <begin position="1"/>
        <end position="141"/>
    </location>
</feature>
<feature type="sequence conflict" description="In Ref. 5; AAM65638." evidence="4" ref="5">
    <original>A</original>
    <variation>P</variation>
    <location>
        <position position="5"/>
    </location>
</feature>
<feature type="sequence conflict" description="In Ref. 3; BAC43127 and 4; AAO39887." evidence="4" ref="3 4">
    <original>V</original>
    <variation>I</variation>
    <location>
        <position position="68"/>
    </location>
</feature>
<dbReference type="EMBL" id="AC068667">
    <property type="protein sequence ID" value="AAG51744.1"/>
    <property type="molecule type" value="Genomic_DNA"/>
</dbReference>
<dbReference type="EMBL" id="CP002684">
    <property type="protein sequence ID" value="AEE31088.1"/>
    <property type="molecule type" value="Genomic_DNA"/>
</dbReference>
<dbReference type="EMBL" id="AK118524">
    <property type="protein sequence ID" value="BAC43127.1"/>
    <property type="molecule type" value="mRNA"/>
</dbReference>
<dbReference type="EMBL" id="BT003659">
    <property type="protein sequence ID" value="AAO39887.1"/>
    <property type="molecule type" value="mRNA"/>
</dbReference>
<dbReference type="EMBL" id="AY088092">
    <property type="protein sequence ID" value="AAM65638.1"/>
    <property type="status" value="ALT_INIT"/>
    <property type="molecule type" value="mRNA"/>
</dbReference>
<dbReference type="PIR" id="A86417">
    <property type="entry name" value="A86417"/>
</dbReference>
<dbReference type="RefSeq" id="NP_174236.1">
    <property type="nucleotide sequence ID" value="NM_102683.3"/>
</dbReference>
<dbReference type="FunCoup" id="Q9C7Q8">
    <property type="interactions" value="150"/>
</dbReference>
<dbReference type="STRING" id="3702.Q9C7Q8"/>
<dbReference type="PaxDb" id="3702-AT1G29430.1"/>
<dbReference type="EnsemblPlants" id="AT1G29430.1">
    <property type="protein sequence ID" value="AT1G29430.1"/>
    <property type="gene ID" value="AT1G29430"/>
</dbReference>
<dbReference type="GeneID" id="839819"/>
<dbReference type="Gramene" id="AT1G29430.1">
    <property type="protein sequence ID" value="AT1G29430.1"/>
    <property type="gene ID" value="AT1G29430"/>
</dbReference>
<dbReference type="KEGG" id="ath:AT1G29430"/>
<dbReference type="Araport" id="AT1G29430"/>
<dbReference type="TAIR" id="AT1G29430">
    <property type="gene designation" value="SAUR62"/>
</dbReference>
<dbReference type="eggNOG" id="ENOG502S4GQ">
    <property type="taxonomic scope" value="Eukaryota"/>
</dbReference>
<dbReference type="HOGENOM" id="CLU_090137_1_1_1"/>
<dbReference type="InParanoid" id="Q9C7Q8"/>
<dbReference type="OMA" id="ATIMEYV"/>
<dbReference type="PRO" id="PR:Q9C7Q8"/>
<dbReference type="Proteomes" id="UP000006548">
    <property type="component" value="Chromosome 1"/>
</dbReference>
<dbReference type="ExpressionAtlas" id="Q9C7Q8">
    <property type="expression patterns" value="baseline and differential"/>
</dbReference>
<dbReference type="GO" id="GO:0005634">
    <property type="term" value="C:nucleus"/>
    <property type="evidence" value="ECO:0000314"/>
    <property type="project" value="TAIR"/>
</dbReference>
<dbReference type="GO" id="GO:0005886">
    <property type="term" value="C:plasma membrane"/>
    <property type="evidence" value="ECO:0007669"/>
    <property type="project" value="UniProtKB-SubCell"/>
</dbReference>
<dbReference type="GO" id="GO:0090406">
    <property type="term" value="C:pollen tube"/>
    <property type="evidence" value="ECO:0000314"/>
    <property type="project" value="TAIR"/>
</dbReference>
<dbReference type="GO" id="GO:0009926">
    <property type="term" value="P:auxin polar transport"/>
    <property type="evidence" value="ECO:0000314"/>
    <property type="project" value="UniProtKB"/>
</dbReference>
<dbReference type="GO" id="GO:0009734">
    <property type="term" value="P:auxin-activated signaling pathway"/>
    <property type="evidence" value="ECO:0007669"/>
    <property type="project" value="UniProtKB-KW"/>
</dbReference>
<dbReference type="GO" id="GO:0042255">
    <property type="term" value="P:ribosome assembly"/>
    <property type="evidence" value="ECO:0000315"/>
    <property type="project" value="TAIR"/>
</dbReference>
<dbReference type="GO" id="GO:0080086">
    <property type="term" value="P:stamen filament development"/>
    <property type="evidence" value="ECO:0000315"/>
    <property type="project" value="UniProtKB"/>
</dbReference>
<dbReference type="InterPro" id="IPR003676">
    <property type="entry name" value="SAUR_fam"/>
</dbReference>
<dbReference type="PANTHER" id="PTHR31175">
    <property type="entry name" value="AUXIN-RESPONSIVE FAMILY PROTEIN"/>
    <property type="match status" value="1"/>
</dbReference>
<dbReference type="PANTHER" id="PTHR31175:SF99">
    <property type="entry name" value="AUXIN-RESPONSIVE PROTEIN SAUR61-RELATED"/>
    <property type="match status" value="1"/>
</dbReference>
<dbReference type="Pfam" id="PF02519">
    <property type="entry name" value="Auxin_inducible"/>
    <property type="match status" value="1"/>
</dbReference>
<comment type="function">
    <text evidence="2">May promote auxin-stimulated organ elongation, such as hypocotyls, stamen filaments and petals.</text>
</comment>
<comment type="subcellular location">
    <subcellularLocation>
        <location evidence="1">Cell membrane</location>
        <topology evidence="1">Peripheral membrane protein</topology>
    </subcellularLocation>
</comment>
<comment type="tissue specificity">
    <text evidence="2">Expressed in stamen filaments and petals.</text>
</comment>
<comment type="miscellaneous">
    <text evidence="2">Plants over-expressing SAUR62 display twisted inflorescence stems, and increased length of stamen filaments and petals.</text>
</comment>
<comment type="similarity">
    <text evidence="4">Belongs to the ARG7 family.</text>
</comment>
<comment type="sequence caution" evidence="4">
    <conflict type="erroneous initiation">
        <sequence resource="EMBL-CDS" id="AAM65638"/>
    </conflict>
    <text>Truncated N-terminus.</text>
</comment>
<reference key="1">
    <citation type="journal article" date="2000" name="Nature">
        <title>Sequence and analysis of chromosome 1 of the plant Arabidopsis thaliana.</title>
        <authorList>
            <person name="Theologis A."/>
            <person name="Ecker J.R."/>
            <person name="Palm C.J."/>
            <person name="Federspiel N.A."/>
            <person name="Kaul S."/>
            <person name="White O."/>
            <person name="Alonso J."/>
            <person name="Altafi H."/>
            <person name="Araujo R."/>
            <person name="Bowman C.L."/>
            <person name="Brooks S.Y."/>
            <person name="Buehler E."/>
            <person name="Chan A."/>
            <person name="Chao Q."/>
            <person name="Chen H."/>
            <person name="Cheuk R.F."/>
            <person name="Chin C.W."/>
            <person name="Chung M.K."/>
            <person name="Conn L."/>
            <person name="Conway A.B."/>
            <person name="Conway A.R."/>
            <person name="Creasy T.H."/>
            <person name="Dewar K."/>
            <person name="Dunn P."/>
            <person name="Etgu P."/>
            <person name="Feldblyum T.V."/>
            <person name="Feng J.-D."/>
            <person name="Fong B."/>
            <person name="Fujii C.Y."/>
            <person name="Gill J.E."/>
            <person name="Goldsmith A.D."/>
            <person name="Haas B."/>
            <person name="Hansen N.F."/>
            <person name="Hughes B."/>
            <person name="Huizar L."/>
            <person name="Hunter J.L."/>
            <person name="Jenkins J."/>
            <person name="Johnson-Hopson C."/>
            <person name="Khan S."/>
            <person name="Khaykin E."/>
            <person name="Kim C.J."/>
            <person name="Koo H.L."/>
            <person name="Kremenetskaia I."/>
            <person name="Kurtz D.B."/>
            <person name="Kwan A."/>
            <person name="Lam B."/>
            <person name="Langin-Hooper S."/>
            <person name="Lee A."/>
            <person name="Lee J.M."/>
            <person name="Lenz C.A."/>
            <person name="Li J.H."/>
            <person name="Li Y.-P."/>
            <person name="Lin X."/>
            <person name="Liu S.X."/>
            <person name="Liu Z.A."/>
            <person name="Luros J.S."/>
            <person name="Maiti R."/>
            <person name="Marziali A."/>
            <person name="Militscher J."/>
            <person name="Miranda M."/>
            <person name="Nguyen M."/>
            <person name="Nierman W.C."/>
            <person name="Osborne B.I."/>
            <person name="Pai G."/>
            <person name="Peterson J."/>
            <person name="Pham P.K."/>
            <person name="Rizzo M."/>
            <person name="Rooney T."/>
            <person name="Rowley D."/>
            <person name="Sakano H."/>
            <person name="Salzberg S.L."/>
            <person name="Schwartz J.R."/>
            <person name="Shinn P."/>
            <person name="Southwick A.M."/>
            <person name="Sun H."/>
            <person name="Tallon L.J."/>
            <person name="Tambunga G."/>
            <person name="Toriumi M.J."/>
            <person name="Town C.D."/>
            <person name="Utterback T."/>
            <person name="Van Aken S."/>
            <person name="Vaysberg M."/>
            <person name="Vysotskaia V.S."/>
            <person name="Walker M."/>
            <person name="Wu D."/>
            <person name="Yu G."/>
            <person name="Fraser C.M."/>
            <person name="Venter J.C."/>
            <person name="Davis R.W."/>
        </authorList>
    </citation>
    <scope>NUCLEOTIDE SEQUENCE [LARGE SCALE GENOMIC DNA]</scope>
    <source>
        <strain>cv. Columbia</strain>
    </source>
</reference>
<reference key="2">
    <citation type="journal article" date="2017" name="Plant J.">
        <title>Araport11: a complete reannotation of the Arabidopsis thaliana reference genome.</title>
        <authorList>
            <person name="Cheng C.Y."/>
            <person name="Krishnakumar V."/>
            <person name="Chan A.P."/>
            <person name="Thibaud-Nissen F."/>
            <person name="Schobel S."/>
            <person name="Town C.D."/>
        </authorList>
    </citation>
    <scope>GENOME REANNOTATION</scope>
    <source>
        <strain>cv. Columbia</strain>
    </source>
</reference>
<reference key="3">
    <citation type="journal article" date="2002" name="Science">
        <title>Functional annotation of a full-length Arabidopsis cDNA collection.</title>
        <authorList>
            <person name="Seki M."/>
            <person name="Narusaka M."/>
            <person name="Kamiya A."/>
            <person name="Ishida J."/>
            <person name="Satou M."/>
            <person name="Sakurai T."/>
            <person name="Nakajima M."/>
            <person name="Enju A."/>
            <person name="Akiyama K."/>
            <person name="Oono Y."/>
            <person name="Muramatsu M."/>
            <person name="Hayashizaki Y."/>
            <person name="Kawai J."/>
            <person name="Carninci P."/>
            <person name="Itoh M."/>
            <person name="Ishii Y."/>
            <person name="Arakawa T."/>
            <person name="Shibata K."/>
            <person name="Shinagawa A."/>
            <person name="Shinozaki K."/>
        </authorList>
    </citation>
    <scope>NUCLEOTIDE SEQUENCE [LARGE SCALE MRNA]</scope>
    <source>
        <strain>cv. Columbia</strain>
    </source>
</reference>
<reference key="4">
    <citation type="journal article" date="2003" name="Science">
        <title>Empirical analysis of transcriptional activity in the Arabidopsis genome.</title>
        <authorList>
            <person name="Yamada K."/>
            <person name="Lim J."/>
            <person name="Dale J.M."/>
            <person name="Chen H."/>
            <person name="Shinn P."/>
            <person name="Palm C.J."/>
            <person name="Southwick A.M."/>
            <person name="Wu H.C."/>
            <person name="Kim C.J."/>
            <person name="Nguyen M."/>
            <person name="Pham P.K."/>
            <person name="Cheuk R.F."/>
            <person name="Karlin-Newmann G."/>
            <person name="Liu S.X."/>
            <person name="Lam B."/>
            <person name="Sakano H."/>
            <person name="Wu T."/>
            <person name="Yu G."/>
            <person name="Miranda M."/>
            <person name="Quach H.L."/>
            <person name="Tripp M."/>
            <person name="Chang C.H."/>
            <person name="Lee J.M."/>
            <person name="Toriumi M.J."/>
            <person name="Chan M.M."/>
            <person name="Tang C.C."/>
            <person name="Onodera C.S."/>
            <person name="Deng J.M."/>
            <person name="Akiyama K."/>
            <person name="Ansari Y."/>
            <person name="Arakawa T."/>
            <person name="Banh J."/>
            <person name="Banno F."/>
            <person name="Bowser L."/>
            <person name="Brooks S.Y."/>
            <person name="Carninci P."/>
            <person name="Chao Q."/>
            <person name="Choy N."/>
            <person name="Enju A."/>
            <person name="Goldsmith A.D."/>
            <person name="Gurjal M."/>
            <person name="Hansen N.F."/>
            <person name="Hayashizaki Y."/>
            <person name="Johnson-Hopson C."/>
            <person name="Hsuan V.W."/>
            <person name="Iida K."/>
            <person name="Karnes M."/>
            <person name="Khan S."/>
            <person name="Koesema E."/>
            <person name="Ishida J."/>
            <person name="Jiang P.X."/>
            <person name="Jones T."/>
            <person name="Kawai J."/>
            <person name="Kamiya A."/>
            <person name="Meyers C."/>
            <person name="Nakajima M."/>
            <person name="Narusaka M."/>
            <person name="Seki M."/>
            <person name="Sakurai T."/>
            <person name="Satou M."/>
            <person name="Tamse R."/>
            <person name="Vaysberg M."/>
            <person name="Wallender E.K."/>
            <person name="Wong C."/>
            <person name="Yamamura Y."/>
            <person name="Yuan S."/>
            <person name="Shinozaki K."/>
            <person name="Davis R.W."/>
            <person name="Theologis A."/>
            <person name="Ecker J.R."/>
        </authorList>
    </citation>
    <scope>NUCLEOTIDE SEQUENCE [LARGE SCALE MRNA]</scope>
    <source>
        <strain>cv. Columbia</strain>
    </source>
</reference>
<reference key="5">
    <citation type="submission" date="2002-03" db="EMBL/GenBank/DDBJ databases">
        <title>Full-length cDNA from Arabidopsis thaliana.</title>
        <authorList>
            <person name="Brover V.V."/>
            <person name="Troukhan M.E."/>
            <person name="Alexandrov N.A."/>
            <person name="Lu Y.-P."/>
            <person name="Flavell R.B."/>
            <person name="Feldmann K.A."/>
        </authorList>
    </citation>
    <scope>NUCLEOTIDE SEQUENCE [LARGE SCALE MRNA]</scope>
</reference>
<reference key="6">
    <citation type="journal article" date="2002" name="Plant Mol. Biol.">
        <title>Auxin-responsive gene expression: genes, promoters and regulatory factors.</title>
        <authorList>
            <person name="Hagen G."/>
            <person name="Guilfoyle T.J."/>
        </authorList>
    </citation>
    <scope>GENE FAMILY</scope>
    <scope>NOMENCLATURE</scope>
</reference>
<reference key="7">
    <citation type="journal article" date="2012" name="Plant J.">
        <title>Arabidopsis SMALL AUXIN UP RNA63 promotes hypocotyl and stamen filament elongation.</title>
        <authorList>
            <person name="Chae K."/>
            <person name="Isaacs C.G."/>
            <person name="Reeves P.H."/>
            <person name="Maloney G.S."/>
            <person name="Muday G.K."/>
            <person name="Nagpal P."/>
            <person name="Reed J.W."/>
        </authorList>
    </citation>
    <scope>FUNCTION</scope>
    <scope>TISSUE SPECIFICITY</scope>
</reference>
<evidence type="ECO:0000250" key="1">
    <source>
        <dbReference type="UniProtKB" id="F4I1H5"/>
    </source>
</evidence>
<evidence type="ECO:0000269" key="2">
    <source>
    </source>
</evidence>
<evidence type="ECO:0000303" key="3">
    <source>
    </source>
</evidence>
<evidence type="ECO:0000305" key="4"/>
<evidence type="ECO:0000312" key="5">
    <source>
        <dbReference type="Araport" id="AT1G29430"/>
    </source>
</evidence>
<evidence type="ECO:0000312" key="6">
    <source>
        <dbReference type="EMBL" id="AAG51744.1"/>
    </source>
</evidence>
<evidence type="ECO:0000312" key="7">
    <source>
        <dbReference type="Proteomes" id="UP000006548"/>
    </source>
</evidence>
<accession>Q9C7Q8</accession>
<accession>Q8GX01</accession>
<accession>Q8LA12</accession>